<accession>B7LMI1</accession>
<gene>
    <name evidence="1" type="primary">tgt</name>
    <name type="ordered locus">EFER_2619</name>
</gene>
<protein>
    <recommendedName>
        <fullName evidence="1">Queuine tRNA-ribosyltransferase</fullName>
        <ecNumber evidence="1">2.4.2.29</ecNumber>
    </recommendedName>
    <alternativeName>
        <fullName evidence="1">Guanine insertion enzyme</fullName>
    </alternativeName>
    <alternativeName>
        <fullName evidence="1">tRNA-guanine transglycosylase</fullName>
    </alternativeName>
</protein>
<feature type="chain" id="PRO_1000198008" description="Queuine tRNA-ribosyltransferase">
    <location>
        <begin position="1"/>
        <end position="375"/>
    </location>
</feature>
<feature type="region of interest" description="RNA binding" evidence="1">
    <location>
        <begin position="245"/>
        <end position="251"/>
    </location>
</feature>
<feature type="region of interest" description="RNA binding; important for wobble base 34 recognition" evidence="1">
    <location>
        <begin position="269"/>
        <end position="273"/>
    </location>
</feature>
<feature type="active site" description="Proton acceptor" evidence="1">
    <location>
        <position position="89"/>
    </location>
</feature>
<feature type="active site" description="Nucleophile" evidence="1">
    <location>
        <position position="264"/>
    </location>
</feature>
<feature type="binding site" evidence="1">
    <location>
        <begin position="89"/>
        <end position="93"/>
    </location>
    <ligand>
        <name>substrate</name>
    </ligand>
</feature>
<feature type="binding site" evidence="1">
    <location>
        <position position="143"/>
    </location>
    <ligand>
        <name>substrate</name>
    </ligand>
</feature>
<feature type="binding site" evidence="1">
    <location>
        <position position="187"/>
    </location>
    <ligand>
        <name>substrate</name>
    </ligand>
</feature>
<feature type="binding site" evidence="1">
    <location>
        <position position="214"/>
    </location>
    <ligand>
        <name>substrate</name>
    </ligand>
</feature>
<feature type="binding site" evidence="1">
    <location>
        <position position="302"/>
    </location>
    <ligand>
        <name>Zn(2+)</name>
        <dbReference type="ChEBI" id="CHEBI:29105"/>
    </ligand>
</feature>
<feature type="binding site" evidence="1">
    <location>
        <position position="304"/>
    </location>
    <ligand>
        <name>Zn(2+)</name>
        <dbReference type="ChEBI" id="CHEBI:29105"/>
    </ligand>
</feature>
<feature type="binding site" evidence="1">
    <location>
        <position position="307"/>
    </location>
    <ligand>
        <name>Zn(2+)</name>
        <dbReference type="ChEBI" id="CHEBI:29105"/>
    </ligand>
</feature>
<feature type="binding site" evidence="1">
    <location>
        <position position="333"/>
    </location>
    <ligand>
        <name>Zn(2+)</name>
        <dbReference type="ChEBI" id="CHEBI:29105"/>
    </ligand>
</feature>
<organism>
    <name type="scientific">Escherichia fergusonii (strain ATCC 35469 / DSM 13698 / CCUG 18766 / IAM 14443 / JCM 21226 / LMG 7866 / NBRC 102419 / NCTC 12128 / CDC 0568-73)</name>
    <dbReference type="NCBI Taxonomy" id="585054"/>
    <lineage>
        <taxon>Bacteria</taxon>
        <taxon>Pseudomonadati</taxon>
        <taxon>Pseudomonadota</taxon>
        <taxon>Gammaproteobacteria</taxon>
        <taxon>Enterobacterales</taxon>
        <taxon>Enterobacteriaceae</taxon>
        <taxon>Escherichia</taxon>
    </lineage>
</organism>
<comment type="function">
    <text evidence="1">Catalyzes the base-exchange of a guanine (G) residue with the queuine precursor 7-aminomethyl-7-deazaguanine (PreQ1) at position 34 (anticodon wobble position) in tRNAs with GU(N) anticodons (tRNA-Asp, -Asn, -His and -Tyr). Catalysis occurs through a double-displacement mechanism. The nucleophile active site attacks the C1' of nucleotide 34 to detach the guanine base from the RNA, forming a covalent enzyme-RNA intermediate. The proton acceptor active site deprotonates the incoming PreQ1, allowing a nucleophilic attack on the C1' of the ribose to form the product. After dissociation, two additional enzymatic reactions on the tRNA convert PreQ1 to queuine (Q), resulting in the hypermodified nucleoside queuosine (7-(((4,5-cis-dihydroxy-2-cyclopenten-1-yl)amino)methyl)-7-deazaguanosine).</text>
</comment>
<comment type="catalytic activity">
    <reaction evidence="1">
        <text>7-aminomethyl-7-carbaguanine + guanosine(34) in tRNA = 7-aminomethyl-7-carbaguanosine(34) in tRNA + guanine</text>
        <dbReference type="Rhea" id="RHEA:24104"/>
        <dbReference type="Rhea" id="RHEA-COMP:10341"/>
        <dbReference type="Rhea" id="RHEA-COMP:10342"/>
        <dbReference type="ChEBI" id="CHEBI:16235"/>
        <dbReference type="ChEBI" id="CHEBI:58703"/>
        <dbReference type="ChEBI" id="CHEBI:74269"/>
        <dbReference type="ChEBI" id="CHEBI:82833"/>
        <dbReference type="EC" id="2.4.2.29"/>
    </reaction>
</comment>
<comment type="cofactor">
    <cofactor evidence="1">
        <name>Zn(2+)</name>
        <dbReference type="ChEBI" id="CHEBI:29105"/>
    </cofactor>
    <text evidence="1">Binds 1 zinc ion per subunit.</text>
</comment>
<comment type="pathway">
    <text evidence="1">tRNA modification; tRNA-queuosine biosynthesis.</text>
</comment>
<comment type="subunit">
    <text evidence="1">Homodimer. Within each dimer, one monomer is responsible for RNA recognition and catalysis, while the other monomer binds to the replacement base PreQ1.</text>
</comment>
<comment type="similarity">
    <text evidence="1">Belongs to the queuine tRNA-ribosyltransferase family.</text>
</comment>
<keyword id="KW-0328">Glycosyltransferase</keyword>
<keyword id="KW-0479">Metal-binding</keyword>
<keyword id="KW-0671">Queuosine biosynthesis</keyword>
<keyword id="KW-0808">Transferase</keyword>
<keyword id="KW-0819">tRNA processing</keyword>
<keyword id="KW-0862">Zinc</keyword>
<sequence length="375" mass="42594">MKFELDTTDGRARRGRLVFDRGVVETPCFMPVGTYGTVKGMTPEEVEATGAQIILGNTFHLWLRPGQEIMKLHGDLHDFMQWKGPILTDSGGFQVFSLGDIRKITEQGVHFRNPINGDPIFLDPEKSMEIQYDLGSDIVMIFDECTPYPADWDYAKRSMEMSLRWAKRSRERFDSLGNKNALFGIIQGSVYEDLRDISVKGLVDIGFDGYAVGGLAVGEPKADMHRILEHVCPQIPADKPRYLMGVGKPEDLVEGVRRGIDMFDCVMPTRNARNGHLFVTDGVVKIRNAKYKSDTGPLDPECDCYTCRNYSRAYLHHLDRCNEILGARLNTIHNLRYYQRLMAGLRKAIEEGKLESFVTDFYQRQGREVPPLNVD</sequence>
<evidence type="ECO:0000255" key="1">
    <source>
        <dbReference type="HAMAP-Rule" id="MF_00168"/>
    </source>
</evidence>
<proteinExistence type="inferred from homology"/>
<name>TGT_ESCF3</name>
<dbReference type="EC" id="2.4.2.29" evidence="1"/>
<dbReference type="EMBL" id="CU928158">
    <property type="protein sequence ID" value="CAQ90114.1"/>
    <property type="molecule type" value="Genomic_DNA"/>
</dbReference>
<dbReference type="RefSeq" id="WP_000667319.1">
    <property type="nucleotide sequence ID" value="NC_011740.1"/>
</dbReference>
<dbReference type="SMR" id="B7LMI1"/>
<dbReference type="GeneID" id="93777054"/>
<dbReference type="KEGG" id="efe:EFER_2619"/>
<dbReference type="HOGENOM" id="CLU_022060_0_1_6"/>
<dbReference type="OrthoDB" id="9805417at2"/>
<dbReference type="UniPathway" id="UPA00392"/>
<dbReference type="Proteomes" id="UP000000745">
    <property type="component" value="Chromosome"/>
</dbReference>
<dbReference type="GO" id="GO:0005829">
    <property type="term" value="C:cytosol"/>
    <property type="evidence" value="ECO:0007669"/>
    <property type="project" value="TreeGrafter"/>
</dbReference>
<dbReference type="GO" id="GO:0046872">
    <property type="term" value="F:metal ion binding"/>
    <property type="evidence" value="ECO:0007669"/>
    <property type="project" value="UniProtKB-KW"/>
</dbReference>
<dbReference type="GO" id="GO:0008479">
    <property type="term" value="F:tRNA-guanosine(34) queuine transglycosylase activity"/>
    <property type="evidence" value="ECO:0007669"/>
    <property type="project" value="UniProtKB-UniRule"/>
</dbReference>
<dbReference type="GO" id="GO:0008616">
    <property type="term" value="P:queuosine biosynthetic process"/>
    <property type="evidence" value="ECO:0007669"/>
    <property type="project" value="UniProtKB-UniRule"/>
</dbReference>
<dbReference type="GO" id="GO:0002099">
    <property type="term" value="P:tRNA wobble guanine modification"/>
    <property type="evidence" value="ECO:0007669"/>
    <property type="project" value="TreeGrafter"/>
</dbReference>
<dbReference type="GO" id="GO:0101030">
    <property type="term" value="P:tRNA-guanine transglycosylation"/>
    <property type="evidence" value="ECO:0007669"/>
    <property type="project" value="InterPro"/>
</dbReference>
<dbReference type="FunFam" id="3.20.20.105:FF:000001">
    <property type="entry name" value="Queuine tRNA-ribosyltransferase"/>
    <property type="match status" value="1"/>
</dbReference>
<dbReference type="Gene3D" id="3.20.20.105">
    <property type="entry name" value="Queuine tRNA-ribosyltransferase-like"/>
    <property type="match status" value="1"/>
</dbReference>
<dbReference type="HAMAP" id="MF_00168">
    <property type="entry name" value="Q_tRNA_Tgt"/>
    <property type="match status" value="1"/>
</dbReference>
<dbReference type="InterPro" id="IPR050076">
    <property type="entry name" value="ArchSynthase1/Queuine_TRR"/>
</dbReference>
<dbReference type="InterPro" id="IPR004803">
    <property type="entry name" value="TGT"/>
</dbReference>
<dbReference type="InterPro" id="IPR036511">
    <property type="entry name" value="TGT-like_sf"/>
</dbReference>
<dbReference type="InterPro" id="IPR002616">
    <property type="entry name" value="tRNA_ribo_trans-like"/>
</dbReference>
<dbReference type="NCBIfam" id="TIGR00430">
    <property type="entry name" value="Q_tRNA_tgt"/>
    <property type="match status" value="1"/>
</dbReference>
<dbReference type="NCBIfam" id="TIGR00449">
    <property type="entry name" value="tgt_general"/>
    <property type="match status" value="1"/>
</dbReference>
<dbReference type="PANTHER" id="PTHR46499">
    <property type="entry name" value="QUEUINE TRNA-RIBOSYLTRANSFERASE"/>
    <property type="match status" value="1"/>
</dbReference>
<dbReference type="PANTHER" id="PTHR46499:SF1">
    <property type="entry name" value="QUEUINE TRNA-RIBOSYLTRANSFERASE"/>
    <property type="match status" value="1"/>
</dbReference>
<dbReference type="Pfam" id="PF01702">
    <property type="entry name" value="TGT"/>
    <property type="match status" value="1"/>
</dbReference>
<dbReference type="SUPFAM" id="SSF51713">
    <property type="entry name" value="tRNA-guanine transglycosylase"/>
    <property type="match status" value="1"/>
</dbReference>
<reference key="1">
    <citation type="journal article" date="2009" name="PLoS Genet.">
        <title>Organised genome dynamics in the Escherichia coli species results in highly diverse adaptive paths.</title>
        <authorList>
            <person name="Touchon M."/>
            <person name="Hoede C."/>
            <person name="Tenaillon O."/>
            <person name="Barbe V."/>
            <person name="Baeriswyl S."/>
            <person name="Bidet P."/>
            <person name="Bingen E."/>
            <person name="Bonacorsi S."/>
            <person name="Bouchier C."/>
            <person name="Bouvet O."/>
            <person name="Calteau A."/>
            <person name="Chiapello H."/>
            <person name="Clermont O."/>
            <person name="Cruveiller S."/>
            <person name="Danchin A."/>
            <person name="Diard M."/>
            <person name="Dossat C."/>
            <person name="Karoui M.E."/>
            <person name="Frapy E."/>
            <person name="Garry L."/>
            <person name="Ghigo J.M."/>
            <person name="Gilles A.M."/>
            <person name="Johnson J."/>
            <person name="Le Bouguenec C."/>
            <person name="Lescat M."/>
            <person name="Mangenot S."/>
            <person name="Martinez-Jehanne V."/>
            <person name="Matic I."/>
            <person name="Nassif X."/>
            <person name="Oztas S."/>
            <person name="Petit M.A."/>
            <person name="Pichon C."/>
            <person name="Rouy Z."/>
            <person name="Ruf C.S."/>
            <person name="Schneider D."/>
            <person name="Tourret J."/>
            <person name="Vacherie B."/>
            <person name="Vallenet D."/>
            <person name="Medigue C."/>
            <person name="Rocha E.P.C."/>
            <person name="Denamur E."/>
        </authorList>
    </citation>
    <scope>NUCLEOTIDE SEQUENCE [LARGE SCALE GENOMIC DNA]</scope>
    <source>
        <strain>ATCC 35469 / DSM 13698 / BCRC 15582 / CCUG 18766 / IAM 14443 / JCM 21226 / LMG 7866 / NBRC 102419 / NCTC 12128 / CDC 0568-73</strain>
    </source>
</reference>